<name>RS19_PECAS</name>
<accession>Q6CZX4</accession>
<organism>
    <name type="scientific">Pectobacterium atrosepticum (strain SCRI 1043 / ATCC BAA-672)</name>
    <name type="common">Erwinia carotovora subsp. atroseptica</name>
    <dbReference type="NCBI Taxonomy" id="218491"/>
    <lineage>
        <taxon>Bacteria</taxon>
        <taxon>Pseudomonadati</taxon>
        <taxon>Pseudomonadota</taxon>
        <taxon>Gammaproteobacteria</taxon>
        <taxon>Enterobacterales</taxon>
        <taxon>Pectobacteriaceae</taxon>
        <taxon>Pectobacterium</taxon>
    </lineage>
</organism>
<evidence type="ECO:0000255" key="1">
    <source>
        <dbReference type="HAMAP-Rule" id="MF_00531"/>
    </source>
</evidence>
<evidence type="ECO:0000305" key="2"/>
<feature type="chain" id="PRO_0000129824" description="Small ribosomal subunit protein uS19">
    <location>
        <begin position="1"/>
        <end position="92"/>
    </location>
</feature>
<protein>
    <recommendedName>
        <fullName evidence="1">Small ribosomal subunit protein uS19</fullName>
    </recommendedName>
    <alternativeName>
        <fullName evidence="2">30S ribosomal protein S19</fullName>
    </alternativeName>
</protein>
<gene>
    <name evidence="1" type="primary">rpsS</name>
    <name type="ordered locus">ECA4027</name>
</gene>
<reference key="1">
    <citation type="journal article" date="2004" name="Proc. Natl. Acad. Sci. U.S.A.">
        <title>Genome sequence of the enterobacterial phytopathogen Erwinia carotovora subsp. atroseptica and characterization of virulence factors.</title>
        <authorList>
            <person name="Bell K.S."/>
            <person name="Sebaihia M."/>
            <person name="Pritchard L."/>
            <person name="Holden M.T.G."/>
            <person name="Hyman L.J."/>
            <person name="Holeva M.C."/>
            <person name="Thomson N.R."/>
            <person name="Bentley S.D."/>
            <person name="Churcher L.J.C."/>
            <person name="Mungall K."/>
            <person name="Atkin R."/>
            <person name="Bason N."/>
            <person name="Brooks K."/>
            <person name="Chillingworth T."/>
            <person name="Clark K."/>
            <person name="Doggett J."/>
            <person name="Fraser A."/>
            <person name="Hance Z."/>
            <person name="Hauser H."/>
            <person name="Jagels K."/>
            <person name="Moule S."/>
            <person name="Norbertczak H."/>
            <person name="Ormond D."/>
            <person name="Price C."/>
            <person name="Quail M.A."/>
            <person name="Sanders M."/>
            <person name="Walker D."/>
            <person name="Whitehead S."/>
            <person name="Salmond G.P.C."/>
            <person name="Birch P.R.J."/>
            <person name="Parkhill J."/>
            <person name="Toth I.K."/>
        </authorList>
    </citation>
    <scope>NUCLEOTIDE SEQUENCE [LARGE SCALE GENOMIC DNA]</scope>
    <source>
        <strain>SCRI 1043 / ATCC BAA-672</strain>
    </source>
</reference>
<dbReference type="EMBL" id="BX950851">
    <property type="protein sequence ID" value="CAG76924.1"/>
    <property type="molecule type" value="Genomic_DNA"/>
</dbReference>
<dbReference type="RefSeq" id="WP_004929772.1">
    <property type="nucleotide sequence ID" value="NC_004547.2"/>
</dbReference>
<dbReference type="SMR" id="Q6CZX4"/>
<dbReference type="STRING" id="218491.ECA4027"/>
<dbReference type="GeneID" id="98190602"/>
<dbReference type="KEGG" id="eca:ECA4027"/>
<dbReference type="eggNOG" id="COG0185">
    <property type="taxonomic scope" value="Bacteria"/>
</dbReference>
<dbReference type="HOGENOM" id="CLU_144911_0_1_6"/>
<dbReference type="OrthoDB" id="9797833at2"/>
<dbReference type="Proteomes" id="UP000007966">
    <property type="component" value="Chromosome"/>
</dbReference>
<dbReference type="GO" id="GO:0005737">
    <property type="term" value="C:cytoplasm"/>
    <property type="evidence" value="ECO:0007669"/>
    <property type="project" value="UniProtKB-ARBA"/>
</dbReference>
<dbReference type="GO" id="GO:0015935">
    <property type="term" value="C:small ribosomal subunit"/>
    <property type="evidence" value="ECO:0007669"/>
    <property type="project" value="InterPro"/>
</dbReference>
<dbReference type="GO" id="GO:0019843">
    <property type="term" value="F:rRNA binding"/>
    <property type="evidence" value="ECO:0007669"/>
    <property type="project" value="UniProtKB-UniRule"/>
</dbReference>
<dbReference type="GO" id="GO:0003735">
    <property type="term" value="F:structural constituent of ribosome"/>
    <property type="evidence" value="ECO:0007669"/>
    <property type="project" value="InterPro"/>
</dbReference>
<dbReference type="GO" id="GO:0000028">
    <property type="term" value="P:ribosomal small subunit assembly"/>
    <property type="evidence" value="ECO:0007669"/>
    <property type="project" value="TreeGrafter"/>
</dbReference>
<dbReference type="GO" id="GO:0006412">
    <property type="term" value="P:translation"/>
    <property type="evidence" value="ECO:0007669"/>
    <property type="project" value="UniProtKB-UniRule"/>
</dbReference>
<dbReference type="FunFam" id="3.30.860.10:FF:000001">
    <property type="entry name" value="30S ribosomal protein S19"/>
    <property type="match status" value="1"/>
</dbReference>
<dbReference type="Gene3D" id="3.30.860.10">
    <property type="entry name" value="30s Ribosomal Protein S19, Chain A"/>
    <property type="match status" value="1"/>
</dbReference>
<dbReference type="HAMAP" id="MF_00531">
    <property type="entry name" value="Ribosomal_uS19"/>
    <property type="match status" value="1"/>
</dbReference>
<dbReference type="InterPro" id="IPR002222">
    <property type="entry name" value="Ribosomal_uS19"/>
</dbReference>
<dbReference type="InterPro" id="IPR005732">
    <property type="entry name" value="Ribosomal_uS19_bac-type"/>
</dbReference>
<dbReference type="InterPro" id="IPR020934">
    <property type="entry name" value="Ribosomal_uS19_CS"/>
</dbReference>
<dbReference type="InterPro" id="IPR023575">
    <property type="entry name" value="Ribosomal_uS19_SF"/>
</dbReference>
<dbReference type="NCBIfam" id="TIGR01050">
    <property type="entry name" value="rpsS_bact"/>
    <property type="match status" value="1"/>
</dbReference>
<dbReference type="PANTHER" id="PTHR11880">
    <property type="entry name" value="RIBOSOMAL PROTEIN S19P FAMILY MEMBER"/>
    <property type="match status" value="1"/>
</dbReference>
<dbReference type="PANTHER" id="PTHR11880:SF8">
    <property type="entry name" value="SMALL RIBOSOMAL SUBUNIT PROTEIN US19M"/>
    <property type="match status" value="1"/>
</dbReference>
<dbReference type="Pfam" id="PF00203">
    <property type="entry name" value="Ribosomal_S19"/>
    <property type="match status" value="1"/>
</dbReference>
<dbReference type="PIRSF" id="PIRSF002144">
    <property type="entry name" value="Ribosomal_S19"/>
    <property type="match status" value="1"/>
</dbReference>
<dbReference type="PRINTS" id="PR00975">
    <property type="entry name" value="RIBOSOMALS19"/>
</dbReference>
<dbReference type="SUPFAM" id="SSF54570">
    <property type="entry name" value="Ribosomal protein S19"/>
    <property type="match status" value="1"/>
</dbReference>
<dbReference type="PROSITE" id="PS00323">
    <property type="entry name" value="RIBOSOMAL_S19"/>
    <property type="match status" value="1"/>
</dbReference>
<proteinExistence type="inferred from homology"/>
<comment type="function">
    <text evidence="1">Protein S19 forms a complex with S13 that binds strongly to the 16S ribosomal RNA.</text>
</comment>
<comment type="similarity">
    <text evidence="1">Belongs to the universal ribosomal protein uS19 family.</text>
</comment>
<keyword id="KW-1185">Reference proteome</keyword>
<keyword id="KW-0687">Ribonucleoprotein</keyword>
<keyword id="KW-0689">Ribosomal protein</keyword>
<keyword id="KW-0694">RNA-binding</keyword>
<keyword id="KW-0699">rRNA-binding</keyword>
<sequence>MPRSLKKGPFIDLHLLKKVEKAVESGDKKPLRTWSRRSTIFPNMIGLTIAVHNGRQHVPVFVSDEMVGHKLGEFAPTRTYRGHAADKKAKKR</sequence>